<dbReference type="EMBL" id="BC083696">
    <property type="protein sequence ID" value="AAH83696.1"/>
    <property type="molecule type" value="mRNA"/>
</dbReference>
<dbReference type="RefSeq" id="NP_001007611.1">
    <property type="nucleotide sequence ID" value="NM_001007610.1"/>
</dbReference>
<dbReference type="SMR" id="Q5XII5"/>
<dbReference type="FunCoup" id="Q5XII5">
    <property type="interactions" value="3705"/>
</dbReference>
<dbReference type="STRING" id="10116.ENSRNOP00000014261"/>
<dbReference type="iPTMnet" id="Q5XII5"/>
<dbReference type="PhosphoSitePlus" id="Q5XII5"/>
<dbReference type="PaxDb" id="10116-ENSRNOP00000014261"/>
<dbReference type="Ensembl" id="ENSRNOT00000014261.6">
    <property type="protein sequence ID" value="ENSRNOP00000014261.3"/>
    <property type="gene ID" value="ENSRNOG00000010520.6"/>
</dbReference>
<dbReference type="GeneID" id="287432"/>
<dbReference type="KEGG" id="rno:287432"/>
<dbReference type="UCSC" id="RGD:1359624">
    <property type="organism name" value="rat"/>
</dbReference>
<dbReference type="AGR" id="RGD:1359624"/>
<dbReference type="CTD" id="55135"/>
<dbReference type="RGD" id="1359624">
    <property type="gene designation" value="Wrap53"/>
</dbReference>
<dbReference type="eggNOG" id="KOG2919">
    <property type="taxonomic scope" value="Eukaryota"/>
</dbReference>
<dbReference type="GeneTree" id="ENSGT00390000010169"/>
<dbReference type="HOGENOM" id="CLU_022731_1_1_1"/>
<dbReference type="InParanoid" id="Q5XII5"/>
<dbReference type="OMA" id="IRTWILP"/>
<dbReference type="OrthoDB" id="239865at2759"/>
<dbReference type="PhylomeDB" id="Q5XII5"/>
<dbReference type="TreeFam" id="TF315169"/>
<dbReference type="Reactome" id="R-RNO-171319">
    <property type="pathway name" value="Telomere Extension By Telomerase"/>
</dbReference>
<dbReference type="PRO" id="PR:Q5XII5"/>
<dbReference type="Proteomes" id="UP000002494">
    <property type="component" value="Chromosome 10"/>
</dbReference>
<dbReference type="Bgee" id="ENSRNOG00000010520">
    <property type="expression patterns" value="Expressed in thymus and 20 other cell types or tissues"/>
</dbReference>
<dbReference type="GO" id="GO:0015030">
    <property type="term" value="C:Cajal body"/>
    <property type="evidence" value="ECO:0000250"/>
    <property type="project" value="UniProtKB"/>
</dbReference>
<dbReference type="GO" id="GO:0000781">
    <property type="term" value="C:chromosome, telomeric region"/>
    <property type="evidence" value="ECO:0007669"/>
    <property type="project" value="UniProtKB-SubCell"/>
</dbReference>
<dbReference type="GO" id="GO:0005829">
    <property type="term" value="C:cytosol"/>
    <property type="evidence" value="ECO:0007669"/>
    <property type="project" value="Ensembl"/>
</dbReference>
<dbReference type="GO" id="GO:0035861">
    <property type="term" value="C:site of double-strand break"/>
    <property type="evidence" value="ECO:0000250"/>
    <property type="project" value="UniProtKB"/>
</dbReference>
<dbReference type="GO" id="GO:0005697">
    <property type="term" value="C:telomerase holoenzyme complex"/>
    <property type="evidence" value="ECO:0000250"/>
    <property type="project" value="UniProtKB"/>
</dbReference>
<dbReference type="GO" id="GO:0042393">
    <property type="term" value="F:histone binding"/>
    <property type="evidence" value="ECO:0000266"/>
    <property type="project" value="RGD"/>
</dbReference>
<dbReference type="GO" id="GO:0042802">
    <property type="term" value="F:identical protein binding"/>
    <property type="evidence" value="ECO:0000266"/>
    <property type="project" value="RGD"/>
</dbReference>
<dbReference type="GO" id="GO:0140597">
    <property type="term" value="F:protein carrier chaperone"/>
    <property type="evidence" value="ECO:0000266"/>
    <property type="project" value="RGD"/>
</dbReference>
<dbReference type="GO" id="GO:0044877">
    <property type="term" value="F:protein-containing complex binding"/>
    <property type="evidence" value="ECO:0000266"/>
    <property type="project" value="RGD"/>
</dbReference>
<dbReference type="GO" id="GO:0051087">
    <property type="term" value="F:protein-folding chaperone binding"/>
    <property type="evidence" value="ECO:0000266"/>
    <property type="project" value="RGD"/>
</dbReference>
<dbReference type="GO" id="GO:0003723">
    <property type="term" value="F:RNA binding"/>
    <property type="evidence" value="ECO:0000250"/>
    <property type="project" value="UniProtKB"/>
</dbReference>
<dbReference type="GO" id="GO:0140691">
    <property type="term" value="F:RNA folding chaperone"/>
    <property type="evidence" value="ECO:0000266"/>
    <property type="project" value="RGD"/>
</dbReference>
<dbReference type="GO" id="GO:0070034">
    <property type="term" value="F:telomerase RNA binding"/>
    <property type="evidence" value="ECO:0000250"/>
    <property type="project" value="UniProtKB"/>
</dbReference>
<dbReference type="GO" id="GO:0031625">
    <property type="term" value="F:ubiquitin protein ligase binding"/>
    <property type="evidence" value="ECO:0000266"/>
    <property type="project" value="RGD"/>
</dbReference>
<dbReference type="GO" id="GO:0030576">
    <property type="term" value="P:Cajal body organization"/>
    <property type="evidence" value="ECO:0000250"/>
    <property type="project" value="UniProtKB"/>
</dbReference>
<dbReference type="GO" id="GO:0006281">
    <property type="term" value="P:DNA repair"/>
    <property type="evidence" value="ECO:0007669"/>
    <property type="project" value="UniProtKB-KW"/>
</dbReference>
<dbReference type="GO" id="GO:0045739">
    <property type="term" value="P:positive regulation of DNA repair"/>
    <property type="evidence" value="ECO:0000250"/>
    <property type="project" value="UniProtKB"/>
</dbReference>
<dbReference type="GO" id="GO:2000781">
    <property type="term" value="P:positive regulation of double-strand break repair"/>
    <property type="evidence" value="ECO:0000250"/>
    <property type="project" value="UniProtKB"/>
</dbReference>
<dbReference type="GO" id="GO:1905168">
    <property type="term" value="P:positive regulation of double-strand break repair via homologous recombination"/>
    <property type="evidence" value="ECO:0000250"/>
    <property type="project" value="UniProtKB"/>
</dbReference>
<dbReference type="GO" id="GO:2001034">
    <property type="term" value="P:positive regulation of double-strand break repair via nonhomologous end joining"/>
    <property type="evidence" value="ECO:0000250"/>
    <property type="project" value="UniProtKB"/>
</dbReference>
<dbReference type="GO" id="GO:1904851">
    <property type="term" value="P:positive regulation of establishment of protein localization to telomere"/>
    <property type="evidence" value="ECO:0000266"/>
    <property type="project" value="RGD"/>
</dbReference>
<dbReference type="GO" id="GO:0032212">
    <property type="term" value="P:positive regulation of telomere maintenance via telomerase"/>
    <property type="evidence" value="ECO:0000266"/>
    <property type="project" value="RGD"/>
</dbReference>
<dbReference type="GO" id="GO:1904867">
    <property type="term" value="P:protein localization to Cajal body"/>
    <property type="evidence" value="ECO:0000250"/>
    <property type="project" value="UniProtKB"/>
</dbReference>
<dbReference type="GO" id="GO:0034337">
    <property type="term" value="P:RNA folding"/>
    <property type="evidence" value="ECO:0000250"/>
    <property type="project" value="UniProtKB"/>
</dbReference>
<dbReference type="GO" id="GO:0090666">
    <property type="term" value="P:scaRNA localization to Cajal body"/>
    <property type="evidence" value="ECO:0000250"/>
    <property type="project" value="UniProtKB"/>
</dbReference>
<dbReference type="GO" id="GO:0090671">
    <property type="term" value="P:telomerase RNA localization to Cajal body"/>
    <property type="evidence" value="ECO:0000266"/>
    <property type="project" value="RGD"/>
</dbReference>
<dbReference type="GO" id="GO:0032203">
    <property type="term" value="P:telomere formation via telomerase"/>
    <property type="evidence" value="ECO:0000250"/>
    <property type="project" value="UniProtKB"/>
</dbReference>
<dbReference type="GO" id="GO:0007004">
    <property type="term" value="P:telomere maintenance via telomerase"/>
    <property type="evidence" value="ECO:0000250"/>
    <property type="project" value="UniProtKB"/>
</dbReference>
<dbReference type="FunFam" id="2.130.10.10:FF:000453">
    <property type="entry name" value="Telomerase Cajal body protein 1"/>
    <property type="match status" value="1"/>
</dbReference>
<dbReference type="Gene3D" id="2.130.10.10">
    <property type="entry name" value="YVTN repeat-like/Quinoprotein amine dehydrogenase"/>
    <property type="match status" value="1"/>
</dbReference>
<dbReference type="InterPro" id="IPR051150">
    <property type="entry name" value="SWT21/TCAB1_mRNA_Telomere"/>
</dbReference>
<dbReference type="InterPro" id="IPR015943">
    <property type="entry name" value="WD40/YVTN_repeat-like_dom_sf"/>
</dbReference>
<dbReference type="InterPro" id="IPR036322">
    <property type="entry name" value="WD40_repeat_dom_sf"/>
</dbReference>
<dbReference type="InterPro" id="IPR001680">
    <property type="entry name" value="WD40_rpt"/>
</dbReference>
<dbReference type="PANTHER" id="PTHR13211">
    <property type="entry name" value="TELOMERASE CAJAL BODY PROTEIN 1"/>
    <property type="match status" value="1"/>
</dbReference>
<dbReference type="PANTHER" id="PTHR13211:SF0">
    <property type="entry name" value="TELOMERASE CAJAL BODY PROTEIN 1"/>
    <property type="match status" value="1"/>
</dbReference>
<dbReference type="Pfam" id="PF00400">
    <property type="entry name" value="WD40"/>
    <property type="match status" value="4"/>
</dbReference>
<dbReference type="SMART" id="SM00320">
    <property type="entry name" value="WD40"/>
    <property type="match status" value="5"/>
</dbReference>
<dbReference type="SUPFAM" id="SSF50978">
    <property type="entry name" value="WD40 repeat-like"/>
    <property type="match status" value="1"/>
</dbReference>
<dbReference type="PROSITE" id="PS50294">
    <property type="entry name" value="WD_REPEATS_REGION"/>
    <property type="match status" value="1"/>
</dbReference>
<reference key="1">
    <citation type="journal article" date="2004" name="Genome Res.">
        <title>The status, quality, and expansion of the NIH full-length cDNA project: the Mammalian Gene Collection (MGC).</title>
        <authorList>
            <consortium name="The MGC Project Team"/>
        </authorList>
    </citation>
    <scope>NUCLEOTIDE SEQUENCE [LARGE SCALE MRNA]</scope>
    <source>
        <tissue>Heart</tissue>
    </source>
</reference>
<reference key="2">
    <citation type="journal article" date="2012" name="Nat. Commun.">
        <title>Quantitative maps of protein phosphorylation sites across 14 different rat organs and tissues.</title>
        <authorList>
            <person name="Lundby A."/>
            <person name="Secher A."/>
            <person name="Lage K."/>
            <person name="Nordsborg N.B."/>
            <person name="Dmytriyev A."/>
            <person name="Lundby C."/>
            <person name="Olsen J.V."/>
        </authorList>
    </citation>
    <scope>PHOSPHORYLATION [LARGE SCALE ANALYSIS] AT SER-27 AND SER-476</scope>
    <scope>IDENTIFICATION BY MASS SPECTROMETRY [LARGE SCALE ANALYSIS]</scope>
</reference>
<organism>
    <name type="scientific">Rattus norvegicus</name>
    <name type="common">Rat</name>
    <dbReference type="NCBI Taxonomy" id="10116"/>
    <lineage>
        <taxon>Eukaryota</taxon>
        <taxon>Metazoa</taxon>
        <taxon>Chordata</taxon>
        <taxon>Craniata</taxon>
        <taxon>Vertebrata</taxon>
        <taxon>Euteleostomi</taxon>
        <taxon>Mammalia</taxon>
        <taxon>Eutheria</taxon>
        <taxon>Euarchontoglires</taxon>
        <taxon>Glires</taxon>
        <taxon>Rodentia</taxon>
        <taxon>Myomorpha</taxon>
        <taxon>Muroidea</taxon>
        <taxon>Muridae</taxon>
        <taxon>Murinae</taxon>
        <taxon>Rattus</taxon>
    </lineage>
</organism>
<feature type="chain" id="PRO_0000242698" description="Telomerase Cajal body protein 1">
    <location>
        <begin position="1"/>
        <end position="532"/>
    </location>
</feature>
<feature type="repeat" description="WD 1" evidence="2">
    <location>
        <begin position="151"/>
        <end position="190"/>
    </location>
</feature>
<feature type="repeat" description="WD 2" evidence="2">
    <location>
        <begin position="206"/>
        <end position="251"/>
    </location>
</feature>
<feature type="repeat" description="WD 3" evidence="2">
    <location>
        <begin position="256"/>
        <end position="297"/>
    </location>
</feature>
<feature type="repeat" description="WD 4" evidence="2">
    <location>
        <begin position="307"/>
        <end position="348"/>
    </location>
</feature>
<feature type="repeat" description="WD 5" evidence="2">
    <location>
        <begin position="349"/>
        <end position="389"/>
    </location>
</feature>
<feature type="repeat" description="WD 6" evidence="2">
    <location>
        <begin position="395"/>
        <end position="434"/>
    </location>
</feature>
<feature type="region of interest" description="Disordered" evidence="3">
    <location>
        <begin position="1"/>
        <end position="48"/>
    </location>
</feature>
<feature type="region of interest" description="Disordered" evidence="3">
    <location>
        <begin position="83"/>
        <end position="115"/>
    </location>
</feature>
<feature type="region of interest" description="Disordered" evidence="3">
    <location>
        <begin position="505"/>
        <end position="532"/>
    </location>
</feature>
<feature type="modified residue" description="Phosphoserine" evidence="6">
    <location>
        <position position="27"/>
    </location>
</feature>
<feature type="modified residue" description="Phosphoserine" evidence="1">
    <location>
        <position position="61"/>
    </location>
</feature>
<feature type="modified residue" description="Phosphoserine" evidence="1">
    <location>
        <position position="83"/>
    </location>
</feature>
<feature type="modified residue" description="Phosphothreonine" evidence="1">
    <location>
        <position position="474"/>
    </location>
</feature>
<feature type="modified residue" description="Phosphoserine" evidence="6">
    <location>
        <position position="476"/>
    </location>
</feature>
<keyword id="KW-0143">Chaperone</keyword>
<keyword id="KW-0158">Chromosome</keyword>
<keyword id="KW-0227">DNA damage</keyword>
<keyword id="KW-0234">DNA repair</keyword>
<keyword id="KW-0539">Nucleus</keyword>
<keyword id="KW-0597">Phosphoprotein</keyword>
<keyword id="KW-1185">Reference proteome</keyword>
<keyword id="KW-0677">Repeat</keyword>
<keyword id="KW-0694">RNA-binding</keyword>
<keyword id="KW-0779">Telomere</keyword>
<keyword id="KW-0853">WD repeat</keyword>
<name>TCAB1_RAT</name>
<protein>
    <recommendedName>
        <fullName evidence="1">Telomerase Cajal body protein 1</fullName>
    </recommendedName>
    <alternativeName>
        <fullName evidence="1">WD repeat-containing protein 79</fullName>
    </alternativeName>
    <alternativeName>
        <fullName evidence="1">WD40 repeat-containing protein antisense to TP53 gene homolog</fullName>
    </alternativeName>
</protein>
<proteinExistence type="evidence at protein level"/>
<comment type="function">
    <text evidence="1">RNA chaperone that plays a key role in telomere maintenance and RNA localization to Cajal bodies. Specifically recognizes and binds the Cajal body box (CAB box) present in both small Cajal body RNAs (scaRNAs) and telomerase RNA template component (TERC). Essential component of the telomerase holoenzyme complex, a ribonucleoprotein complex essential for the replication of chromosome termini that elongates telomeres in most eukaryotes. In the telomerase holoenzyme complex, required to stimulate the catalytic activity of the complex. Acts by specifically binding the CAB box of the TERC RNA and controlling the folding of the CR4/CR5 region of the TERC RNA, a critical step for telomerase activity. In addition, also controls telomerase holoenzyme complex localization to Cajal body. During S phase, required for delivery of TERC to telomeres during S phase and for telomerase activity. In addition to its role in telomere maintenance, also required for Cajal body formation, probably by mediating localization of scaRNAs to Cajal bodies. Also plays a role in DNA repair: phosphorylated by ATM in response to DNA damage and relocalizes to sites of DNA double-strand breaks to promote the repair of DNA double-strand breaks. Acts by recruiting the ubiquitin ligase RNF8 to DNA breaks and promote both homologous recombination (HR) and non-homologous end joining (NHEJ).</text>
</comment>
<comment type="subunit">
    <text evidence="1">Component of the telomerase holoenzyme complex composed of one molecule of TERT, one molecule of WRAP53/TCAB1, two molecules of H/ACA ribonucleoprotein complex subunits DKC1, NOP10, NHP2 and GAR1, and a telomerase RNA template component (TERC). The telomerase holoenzyme complex is associated with TEP1, SMG6/EST1A and POT1. Interacts with the chaperonin-containing T-complex (TRiC) complex; which mediates the folding of WRAP53/TCAB1. Interacts with COIL. Interacts with SMN1. Interacts with RNF8. Interacts with histone H2AX.</text>
</comment>
<comment type="subcellular location">
    <subcellularLocation>
        <location evidence="1">Nucleus</location>
        <location evidence="1">Cajal body</location>
    </subcellularLocation>
    <subcellularLocation>
        <location evidence="1">Chromosome</location>
        <location evidence="1">Telomere</location>
    </subcellularLocation>
    <subcellularLocation>
        <location evidence="1">Chromosome</location>
    </subcellularLocation>
    <text evidence="1">Released from telomerase RNA template component (TERC) in mitotic cells coincident with delocalization from Cajal bodies. In response to DNA damage, localizes to sites of DNA double-strand breaks following phosphorylation by ATM.</text>
</comment>
<comment type="PTM">
    <text evidence="1">Phosphorylated at Ser-61 by ATM in response to DNA damage, promoting its interaction with histone H2AX and localization to sites of DNA double-strand breaks.</text>
</comment>
<comment type="similarity">
    <text evidence="4">Belongs to the TCAB1 family.</text>
</comment>
<gene>
    <name evidence="5" type="primary">Wrap53</name>
    <name evidence="1" type="synonym">Tcab1</name>
    <name evidence="1" type="synonym">Wdr79</name>
</gene>
<sequence length="532" mass="58195">MKTSEELRLAPDSLPSDLVPAPVLQASPADKNTDSEPVPPPCGGDDQLQVATDAVASSVVSQELQQGDSAPLEVEFNISSELSPRIEEQEVPENASLPVEETNRPELESGEAMEGVSEEPAAVDEGDIFWSYSFSQVPQYLSGSWSEFSTRSENFLKGCKWAPDGSCILTNSADNVLRIYNLPPELYSESEQVDYAEMVPVLRMVEGDTIYDYCWYSLMSSTQPDTSYVASSSRENPIHIWDAFTGELRASFRAYNHLDELTAAHSLCFSPDGSQLFCGFNRTVRVFSTSRPGRDCEVRTTFAKKQGQSGIISCLAFSPAQPLYACGSYGRTLGLYAWDDGSPLALLGGHQGGITHLCFHPDGNLFFSGARKDAELLCWDLRQPGHLLWSLSREVTTNQRIYFDLDPSGQFLVSGNTSGVVSVWDISGAFSDCKQLEPVMTFLPQDDCTNGVSLHPTLPLLATASGQRMFPEPTNSGDEGEPELDLPLLSLRHAHPECQLQLWWCGGGPDPSNPDEDQDEKGQGRTEAVGMS</sequence>
<evidence type="ECO:0000250" key="1">
    <source>
        <dbReference type="UniProtKB" id="Q9BUR4"/>
    </source>
</evidence>
<evidence type="ECO:0000255" key="2"/>
<evidence type="ECO:0000256" key="3">
    <source>
        <dbReference type="SAM" id="MobiDB-lite"/>
    </source>
</evidence>
<evidence type="ECO:0000305" key="4"/>
<evidence type="ECO:0000312" key="5">
    <source>
        <dbReference type="RGD" id="1359624"/>
    </source>
</evidence>
<evidence type="ECO:0007744" key="6">
    <source>
    </source>
</evidence>
<accession>Q5XII5</accession>